<evidence type="ECO:0000255" key="1">
    <source>
        <dbReference type="HAMAP-Rule" id="MF_00514"/>
    </source>
</evidence>
<evidence type="ECO:0000305" key="2"/>
<name>RL35_METFK</name>
<organism>
    <name type="scientific">Methylobacillus flagellatus (strain ATCC 51484 / DSM 6875 / VKM B-1610 / KT)</name>
    <dbReference type="NCBI Taxonomy" id="265072"/>
    <lineage>
        <taxon>Bacteria</taxon>
        <taxon>Pseudomonadati</taxon>
        <taxon>Pseudomonadota</taxon>
        <taxon>Betaproteobacteria</taxon>
        <taxon>Nitrosomonadales</taxon>
        <taxon>Methylophilaceae</taxon>
        <taxon>Methylobacillus</taxon>
    </lineage>
</organism>
<feature type="chain" id="PRO_0000258701" description="Large ribosomal subunit protein bL35">
    <location>
        <begin position="1"/>
        <end position="65"/>
    </location>
</feature>
<comment type="similarity">
    <text evidence="1">Belongs to the bacterial ribosomal protein bL35 family.</text>
</comment>
<protein>
    <recommendedName>
        <fullName evidence="1">Large ribosomal subunit protein bL35</fullName>
    </recommendedName>
    <alternativeName>
        <fullName evidence="2">50S ribosomal protein L35</fullName>
    </alternativeName>
</protein>
<reference key="1">
    <citation type="submission" date="2006-03" db="EMBL/GenBank/DDBJ databases">
        <title>Complete sequence of Methylobacillus flagellatus KT.</title>
        <authorList>
            <consortium name="US DOE Joint Genome Institute"/>
            <person name="Copeland A."/>
            <person name="Lucas S."/>
            <person name="Lapidus A."/>
            <person name="Barry K."/>
            <person name="Detter J.C."/>
            <person name="Glavina del Rio T."/>
            <person name="Hammon N."/>
            <person name="Israni S."/>
            <person name="Dalin E."/>
            <person name="Tice H."/>
            <person name="Pitluck S."/>
            <person name="Brettin T."/>
            <person name="Bruce D."/>
            <person name="Han C."/>
            <person name="Tapia R."/>
            <person name="Saunders E."/>
            <person name="Gilna P."/>
            <person name="Schmutz J."/>
            <person name="Larimer F."/>
            <person name="Land M."/>
            <person name="Kyrpides N."/>
            <person name="Anderson I."/>
            <person name="Richardson P."/>
        </authorList>
    </citation>
    <scope>NUCLEOTIDE SEQUENCE [LARGE SCALE GENOMIC DNA]</scope>
    <source>
        <strain>ATCC 51484 / DSM 6875 / VKM B-1610 / KT</strain>
    </source>
</reference>
<accession>Q1GZR9</accession>
<dbReference type="EMBL" id="CP000284">
    <property type="protein sequence ID" value="ABE50268.1"/>
    <property type="molecule type" value="Genomic_DNA"/>
</dbReference>
<dbReference type="RefSeq" id="WP_011480222.1">
    <property type="nucleotide sequence ID" value="NC_007947.1"/>
</dbReference>
<dbReference type="SMR" id="Q1GZR9"/>
<dbReference type="STRING" id="265072.Mfla_2001"/>
<dbReference type="KEGG" id="mfa:Mfla_2001"/>
<dbReference type="eggNOG" id="COG0291">
    <property type="taxonomic scope" value="Bacteria"/>
</dbReference>
<dbReference type="HOGENOM" id="CLU_169643_1_1_4"/>
<dbReference type="OrthoDB" id="47476at2"/>
<dbReference type="Proteomes" id="UP000002440">
    <property type="component" value="Chromosome"/>
</dbReference>
<dbReference type="GO" id="GO:0022625">
    <property type="term" value="C:cytosolic large ribosomal subunit"/>
    <property type="evidence" value="ECO:0007669"/>
    <property type="project" value="TreeGrafter"/>
</dbReference>
<dbReference type="GO" id="GO:0003735">
    <property type="term" value="F:structural constituent of ribosome"/>
    <property type="evidence" value="ECO:0007669"/>
    <property type="project" value="InterPro"/>
</dbReference>
<dbReference type="GO" id="GO:0006412">
    <property type="term" value="P:translation"/>
    <property type="evidence" value="ECO:0007669"/>
    <property type="project" value="UniProtKB-UniRule"/>
</dbReference>
<dbReference type="FunFam" id="4.10.410.60:FF:000001">
    <property type="entry name" value="50S ribosomal protein L35"/>
    <property type="match status" value="1"/>
</dbReference>
<dbReference type="Gene3D" id="4.10.410.60">
    <property type="match status" value="1"/>
</dbReference>
<dbReference type="HAMAP" id="MF_00514">
    <property type="entry name" value="Ribosomal_bL35"/>
    <property type="match status" value="1"/>
</dbReference>
<dbReference type="InterPro" id="IPR001706">
    <property type="entry name" value="Ribosomal_bL35"/>
</dbReference>
<dbReference type="InterPro" id="IPR021137">
    <property type="entry name" value="Ribosomal_bL35-like"/>
</dbReference>
<dbReference type="InterPro" id="IPR018265">
    <property type="entry name" value="Ribosomal_bL35_CS"/>
</dbReference>
<dbReference type="InterPro" id="IPR037229">
    <property type="entry name" value="Ribosomal_bL35_sf"/>
</dbReference>
<dbReference type="NCBIfam" id="TIGR00001">
    <property type="entry name" value="rpmI_bact"/>
    <property type="match status" value="1"/>
</dbReference>
<dbReference type="PANTHER" id="PTHR33343">
    <property type="entry name" value="54S RIBOSOMAL PROTEIN BL35M"/>
    <property type="match status" value="1"/>
</dbReference>
<dbReference type="PANTHER" id="PTHR33343:SF1">
    <property type="entry name" value="LARGE RIBOSOMAL SUBUNIT PROTEIN BL35M"/>
    <property type="match status" value="1"/>
</dbReference>
<dbReference type="Pfam" id="PF01632">
    <property type="entry name" value="Ribosomal_L35p"/>
    <property type="match status" value="1"/>
</dbReference>
<dbReference type="PRINTS" id="PR00064">
    <property type="entry name" value="RIBOSOMALL35"/>
</dbReference>
<dbReference type="SUPFAM" id="SSF143034">
    <property type="entry name" value="L35p-like"/>
    <property type="match status" value="1"/>
</dbReference>
<dbReference type="PROSITE" id="PS00936">
    <property type="entry name" value="RIBOSOMAL_L35"/>
    <property type="match status" value="1"/>
</dbReference>
<keyword id="KW-1185">Reference proteome</keyword>
<keyword id="KW-0687">Ribonucleoprotein</keyword>
<keyword id="KW-0689">Ribosomal protein</keyword>
<proteinExistence type="inferred from homology"/>
<sequence length="65" mass="7520">MPKMKTKSSAKKRFKFLGNGKVKRTHSHLRHILTKKTTKQKRNLRGTAIISSTDVKRVRAMMPTQ</sequence>
<gene>
    <name evidence="1" type="primary">rpmI</name>
    <name type="ordered locus">Mfla_2001</name>
</gene>